<proteinExistence type="evidence at transcript level"/>
<sequence length="339" mass="38604">MSTVHEILCKLSLEGDHSTPPSAYGSVKAYTNFDAERDALNIETAIKTKGVDEVTIVNILTNRSNAQRQDIAFAYQRRTKKELASALKSALSGHLETVILGLLKTPAQYDASELKASMKGLGTDEDSLIEIICSRTNQELQEINRVYKEMYKTDLEKDIISDTSGDFRKLMVALAKGRRAEDGSVIDYELIDQDARDLYDAGVKRKGTDVPKWISIMTERSVPHLQKVFDRYKSYSPYDMLESIRKEVKGDLENAFLNLVQCIQNKPLYFADRLYDSMKGKGTRDKVLIRIMVSRSEVDMLKIRSEFKRKYGKSLYYYIQQDTKGDYQKALLYLCGGDD</sequence>
<dbReference type="EMBL" id="CR860964">
    <property type="protein sequence ID" value="CAH93066.1"/>
    <property type="molecule type" value="mRNA"/>
</dbReference>
<dbReference type="RefSeq" id="NP_001126816.1">
    <property type="nucleotide sequence ID" value="NM_001133344.1"/>
</dbReference>
<dbReference type="SMR" id="Q5R5A0"/>
<dbReference type="FunCoup" id="Q5R5A0">
    <property type="interactions" value="168"/>
</dbReference>
<dbReference type="STRING" id="9601.ENSPPYP00000007399"/>
<dbReference type="Ensembl" id="ENSPPYT00000045908.1">
    <property type="protein sequence ID" value="ENSPPYP00000029450.1"/>
    <property type="gene ID" value="ENSPPYG00000006526.3"/>
</dbReference>
<dbReference type="GeneID" id="100173821"/>
<dbReference type="KEGG" id="pon:100173821"/>
<dbReference type="CTD" id="302"/>
<dbReference type="eggNOG" id="KOG0819">
    <property type="taxonomic scope" value="Eukaryota"/>
</dbReference>
<dbReference type="GeneTree" id="ENSGT00940000154257"/>
<dbReference type="HOGENOM" id="CLU_025300_0_0_1"/>
<dbReference type="InParanoid" id="Q5R5A0"/>
<dbReference type="OMA" id="DLMRIRT"/>
<dbReference type="OrthoDB" id="37886at2759"/>
<dbReference type="TreeFam" id="TF105452"/>
<dbReference type="Proteomes" id="UP000001595">
    <property type="component" value="Chromosome 15"/>
</dbReference>
<dbReference type="GO" id="GO:0005604">
    <property type="term" value="C:basement membrane"/>
    <property type="evidence" value="ECO:0007669"/>
    <property type="project" value="UniProtKB-SubCell"/>
</dbReference>
<dbReference type="GO" id="GO:0005737">
    <property type="term" value="C:cytoplasm"/>
    <property type="evidence" value="ECO:0000250"/>
    <property type="project" value="UniProtKB"/>
</dbReference>
<dbReference type="GO" id="GO:0005768">
    <property type="term" value="C:endosome"/>
    <property type="evidence" value="ECO:0000250"/>
    <property type="project" value="UniProtKB"/>
</dbReference>
<dbReference type="GO" id="GO:0005576">
    <property type="term" value="C:extracellular region"/>
    <property type="evidence" value="ECO:0007669"/>
    <property type="project" value="UniProtKB-KW"/>
</dbReference>
<dbReference type="GO" id="GO:0005634">
    <property type="term" value="C:nucleus"/>
    <property type="evidence" value="ECO:0007669"/>
    <property type="project" value="TreeGrafter"/>
</dbReference>
<dbReference type="GO" id="GO:0005886">
    <property type="term" value="C:plasma membrane"/>
    <property type="evidence" value="ECO:0007669"/>
    <property type="project" value="TreeGrafter"/>
</dbReference>
<dbReference type="GO" id="GO:0012506">
    <property type="term" value="C:vesicle membrane"/>
    <property type="evidence" value="ECO:0007669"/>
    <property type="project" value="TreeGrafter"/>
</dbReference>
<dbReference type="GO" id="GO:0005509">
    <property type="term" value="F:calcium ion binding"/>
    <property type="evidence" value="ECO:0007669"/>
    <property type="project" value="InterPro"/>
</dbReference>
<dbReference type="GO" id="GO:0005544">
    <property type="term" value="F:calcium-dependent phospholipid binding"/>
    <property type="evidence" value="ECO:0007669"/>
    <property type="project" value="UniProtKB-KW"/>
</dbReference>
<dbReference type="GO" id="GO:0008092">
    <property type="term" value="F:cytoskeletal protein binding"/>
    <property type="evidence" value="ECO:0007669"/>
    <property type="project" value="InterPro"/>
</dbReference>
<dbReference type="GO" id="GO:0001786">
    <property type="term" value="F:phosphatidylserine binding"/>
    <property type="evidence" value="ECO:0007669"/>
    <property type="project" value="TreeGrafter"/>
</dbReference>
<dbReference type="GO" id="GO:0004859">
    <property type="term" value="F:phospholipase inhibitor activity"/>
    <property type="evidence" value="ECO:0007669"/>
    <property type="project" value="InterPro"/>
</dbReference>
<dbReference type="GO" id="GO:1905602">
    <property type="term" value="P:positive regulation of receptor-mediated endocytosis involved in cholesterol transport"/>
    <property type="evidence" value="ECO:0007669"/>
    <property type="project" value="TreeGrafter"/>
</dbReference>
<dbReference type="FunFam" id="1.10.220.10:FF:000001">
    <property type="entry name" value="Annexin"/>
    <property type="match status" value="1"/>
</dbReference>
<dbReference type="FunFam" id="1.10.220.10:FF:000002">
    <property type="entry name" value="Annexin"/>
    <property type="match status" value="1"/>
</dbReference>
<dbReference type="FunFam" id="1.10.220.10:FF:000003">
    <property type="entry name" value="Annexin"/>
    <property type="match status" value="1"/>
</dbReference>
<dbReference type="FunFam" id="1.10.220.10:FF:000007">
    <property type="entry name" value="Annexin"/>
    <property type="match status" value="1"/>
</dbReference>
<dbReference type="Gene3D" id="1.10.220.10">
    <property type="entry name" value="Annexin"/>
    <property type="match status" value="4"/>
</dbReference>
<dbReference type="InterPro" id="IPR001464">
    <property type="entry name" value="Annexin"/>
</dbReference>
<dbReference type="InterPro" id="IPR018502">
    <property type="entry name" value="Annexin_repeat"/>
</dbReference>
<dbReference type="InterPro" id="IPR018252">
    <property type="entry name" value="Annexin_repeat_CS"/>
</dbReference>
<dbReference type="InterPro" id="IPR037104">
    <property type="entry name" value="Annexin_sf"/>
</dbReference>
<dbReference type="InterPro" id="IPR002389">
    <property type="entry name" value="ANX2"/>
</dbReference>
<dbReference type="PANTHER" id="PTHR10502">
    <property type="entry name" value="ANNEXIN"/>
    <property type="match status" value="1"/>
</dbReference>
<dbReference type="PANTHER" id="PTHR10502:SF18">
    <property type="entry name" value="ANNEXIN A2-RELATED"/>
    <property type="match status" value="1"/>
</dbReference>
<dbReference type="Pfam" id="PF00191">
    <property type="entry name" value="Annexin"/>
    <property type="match status" value="4"/>
</dbReference>
<dbReference type="PRINTS" id="PR00196">
    <property type="entry name" value="ANNEXIN"/>
</dbReference>
<dbReference type="PRINTS" id="PR00198">
    <property type="entry name" value="ANNEXINII"/>
</dbReference>
<dbReference type="SMART" id="SM00335">
    <property type="entry name" value="ANX"/>
    <property type="match status" value="4"/>
</dbReference>
<dbReference type="SUPFAM" id="SSF47874">
    <property type="entry name" value="Annexin"/>
    <property type="match status" value="1"/>
</dbReference>
<dbReference type="PROSITE" id="PS00223">
    <property type="entry name" value="ANNEXIN_1"/>
    <property type="match status" value="4"/>
</dbReference>
<dbReference type="PROSITE" id="PS51897">
    <property type="entry name" value="ANNEXIN_2"/>
    <property type="match status" value="4"/>
</dbReference>
<comment type="function">
    <text evidence="4 5">Calcium-regulated membrane-binding protein whose affinity for calcium is greatly enhanced by anionic phospholipids. It binds two calcium ions with high affinity. May be involved in heat-stress response. Inhibits PCSK9-enhanced LDLR degradation, probably reduces PCSK9 protein levels via a translational mechanism but also competes with LDLR for binding with PCSK9. Binds to endosomes damaged by phagocytosis of particulate wear debris and participates in endosomal membrane stabilization, thereby limiting NLRP3 inflammasome activation (By similarity). Required for endothelial cell surface plasmin generation and may support fibrinolytic surveillance and neoangiogenesis (By similarity).</text>
</comment>
<comment type="subunit">
    <text evidence="2 4 5 6">Heterotetramer containing 2 light chains of S100A10/p11 and 2 heavy chains of ANXA2/p36 (By similarity). Interacts with ATP1B1 (By similarity). Interacts with DYSF (By similarity). Interacts with COCH. Interacts (via repeat Annexin 1) with PCSK9 (via the C-terminal domain); the interaction inhibits the degradation of LDLR. Interacts with CEACAM1 (via the cytoplasmic domain); this interaction is regulated by phosphorylation of CEACAM1 (By similarity). Interacts with APPL2 and APPL1; targets APPL2 to endosomes and acting in parallel to RAB5A (By similarity). Interacts with PLEKHG4B; this interaction is required for PLEKHG4B localization to cell-cell adhesions (By similarity).</text>
</comment>
<comment type="subcellular location">
    <subcellularLocation>
        <location>Secreted</location>
        <location>Extracellular space</location>
        <location>Extracellular matrix</location>
        <location>Basement membrane</location>
    </subcellularLocation>
    <text evidence="1">In the lamina beneath the plasma membrane.</text>
</comment>
<comment type="domain">
    <text>A pair of annexin repeats may form one binding site for calcium and phospholipid.</text>
</comment>
<comment type="PTM">
    <text evidence="1">ISGylated.</text>
</comment>
<comment type="miscellaneous">
    <text>It may cross-link plasma membrane phospholipids with actin and the cytoskeleton and be involved with exocytosis.</text>
</comment>
<comment type="similarity">
    <text evidence="8 9">Belongs to the annexin family.</text>
</comment>
<comment type="online information" name="Protein Spotlight">
    <link uri="https://www.proteinspotlight.org/back_issues/086"/>
    <text>Red velvet - Issue 86 of September 2007</text>
</comment>
<protein>
    <recommendedName>
        <fullName>Annexin A2</fullName>
    </recommendedName>
    <alternativeName>
        <fullName>Annexin-2</fullName>
    </alternativeName>
</protein>
<name>ANXA2_PONAB</name>
<evidence type="ECO:0000250" key="1"/>
<evidence type="ECO:0000250" key="2">
    <source>
        <dbReference type="UniProtKB" id="A2SW69"/>
    </source>
</evidence>
<evidence type="ECO:0000250" key="3">
    <source>
        <dbReference type="UniProtKB" id="P04272"/>
    </source>
</evidence>
<evidence type="ECO:0000250" key="4">
    <source>
        <dbReference type="UniProtKB" id="P07355"/>
    </source>
</evidence>
<evidence type="ECO:0000250" key="5">
    <source>
        <dbReference type="UniProtKB" id="P07356"/>
    </source>
</evidence>
<evidence type="ECO:0000250" key="6">
    <source>
        <dbReference type="UniProtKB" id="Q6TEQ7"/>
    </source>
</evidence>
<evidence type="ECO:0000255" key="7"/>
<evidence type="ECO:0000255" key="8">
    <source>
        <dbReference type="PROSITE-ProRule" id="PRU01245"/>
    </source>
</evidence>
<evidence type="ECO:0000305" key="9"/>
<organism>
    <name type="scientific">Pongo abelii</name>
    <name type="common">Sumatran orangutan</name>
    <name type="synonym">Pongo pygmaeus abelii</name>
    <dbReference type="NCBI Taxonomy" id="9601"/>
    <lineage>
        <taxon>Eukaryota</taxon>
        <taxon>Metazoa</taxon>
        <taxon>Chordata</taxon>
        <taxon>Craniata</taxon>
        <taxon>Vertebrata</taxon>
        <taxon>Euteleostomi</taxon>
        <taxon>Mammalia</taxon>
        <taxon>Eutheria</taxon>
        <taxon>Euarchontoglires</taxon>
        <taxon>Primates</taxon>
        <taxon>Haplorrhini</taxon>
        <taxon>Catarrhini</taxon>
        <taxon>Hominidae</taxon>
        <taxon>Pongo</taxon>
    </lineage>
</organism>
<keyword id="KW-0007">Acetylation</keyword>
<keyword id="KW-0041">Annexin</keyword>
<keyword id="KW-0084">Basement membrane</keyword>
<keyword id="KW-0106">Calcium</keyword>
<keyword id="KW-0111">Calcium/phospholipid-binding</keyword>
<keyword id="KW-0272">Extracellular matrix</keyword>
<keyword id="KW-1017">Isopeptide bond</keyword>
<keyword id="KW-0597">Phosphoprotein</keyword>
<keyword id="KW-1185">Reference proteome</keyword>
<keyword id="KW-0677">Repeat</keyword>
<keyword id="KW-0964">Secreted</keyword>
<keyword id="KW-0832">Ubl conjugation</keyword>
<reference key="1">
    <citation type="submission" date="2004-11" db="EMBL/GenBank/DDBJ databases">
        <authorList>
            <consortium name="The German cDNA consortium"/>
        </authorList>
    </citation>
    <scope>NUCLEOTIDE SEQUENCE [LARGE SCALE MRNA]</scope>
    <source>
        <tissue>Kidney</tissue>
    </source>
</reference>
<accession>Q5R5A0</accession>
<gene>
    <name type="primary">ANXA2</name>
    <name type="synonym">ANX2</name>
</gene>
<feature type="initiator methionine" description="Removed" evidence="3">
    <location>
        <position position="1"/>
    </location>
</feature>
<feature type="chain" id="PRO_0000288686" description="Annexin A2">
    <location>
        <begin position="2"/>
        <end position="339"/>
    </location>
</feature>
<feature type="repeat" description="Annexin 1" evidence="8">
    <location>
        <begin position="33"/>
        <end position="104"/>
    </location>
</feature>
<feature type="repeat" description="Annexin 2" evidence="8">
    <location>
        <begin position="105"/>
        <end position="176"/>
    </location>
</feature>
<feature type="repeat" description="Annexin 3" evidence="8">
    <location>
        <begin position="189"/>
        <end position="261"/>
    </location>
</feature>
<feature type="repeat" description="Annexin 4" evidence="8">
    <location>
        <begin position="265"/>
        <end position="336"/>
    </location>
</feature>
<feature type="region of interest" description="S100A10-binding site" evidence="7">
    <location>
        <begin position="2"/>
        <end position="24"/>
    </location>
</feature>
<feature type="modified residue" description="N-acetylserine" evidence="3">
    <location>
        <position position="2"/>
    </location>
</feature>
<feature type="modified residue" description="Phosphotyrosine; by SRC" evidence="4">
    <location>
        <position position="24"/>
    </location>
</feature>
<feature type="modified residue" description="Phosphoserine; by PKC" evidence="4">
    <location>
        <position position="26"/>
    </location>
</feature>
<feature type="modified residue" description="N6-acetyllysine; alternate" evidence="5">
    <location>
        <position position="49"/>
    </location>
</feature>
<feature type="modified residue" description="N6-acetyllysine" evidence="5">
    <location>
        <position position="152"/>
    </location>
</feature>
<feature type="modified residue" description="Phosphoserine" evidence="4">
    <location>
        <position position="184"/>
    </location>
</feature>
<feature type="modified residue" description="Phosphotyrosine" evidence="5">
    <location>
        <position position="199"/>
    </location>
</feature>
<feature type="modified residue" description="N6-acetyllysine" evidence="5">
    <location>
        <position position="227"/>
    </location>
</feature>
<feature type="cross-link" description="Glycyl lysine isopeptide (Lys-Gly) (interchain with G-Cter in SUMO1); alternate" evidence="4">
    <location>
        <position position="49"/>
    </location>
</feature>
<feature type="cross-link" description="Glycyl lysine isopeptide (Lys-Gly) (interchain with G-Cter in SUMO2); alternate" evidence="4">
    <location>
        <position position="49"/>
    </location>
</feature>